<reference key="1">
    <citation type="journal article" date="2002" name="Nature">
        <title>The genome sequence of Schizosaccharomyces pombe.</title>
        <authorList>
            <person name="Wood V."/>
            <person name="Gwilliam R."/>
            <person name="Rajandream M.A."/>
            <person name="Lyne M.H."/>
            <person name="Lyne R."/>
            <person name="Stewart A."/>
            <person name="Sgouros J.G."/>
            <person name="Peat N."/>
            <person name="Hayles J."/>
            <person name="Baker S.G."/>
            <person name="Basham D."/>
            <person name="Bowman S."/>
            <person name="Brooks K."/>
            <person name="Brown D."/>
            <person name="Brown S."/>
            <person name="Chillingworth T."/>
            <person name="Churcher C.M."/>
            <person name="Collins M."/>
            <person name="Connor R."/>
            <person name="Cronin A."/>
            <person name="Davis P."/>
            <person name="Feltwell T."/>
            <person name="Fraser A."/>
            <person name="Gentles S."/>
            <person name="Goble A."/>
            <person name="Hamlin N."/>
            <person name="Harris D.E."/>
            <person name="Hidalgo J."/>
            <person name="Hodgson G."/>
            <person name="Holroyd S."/>
            <person name="Hornsby T."/>
            <person name="Howarth S."/>
            <person name="Huckle E.J."/>
            <person name="Hunt S."/>
            <person name="Jagels K."/>
            <person name="James K.D."/>
            <person name="Jones L."/>
            <person name="Jones M."/>
            <person name="Leather S."/>
            <person name="McDonald S."/>
            <person name="McLean J."/>
            <person name="Mooney P."/>
            <person name="Moule S."/>
            <person name="Mungall K.L."/>
            <person name="Murphy L.D."/>
            <person name="Niblett D."/>
            <person name="Odell C."/>
            <person name="Oliver K."/>
            <person name="O'Neil S."/>
            <person name="Pearson D."/>
            <person name="Quail M.A."/>
            <person name="Rabbinowitsch E."/>
            <person name="Rutherford K.M."/>
            <person name="Rutter S."/>
            <person name="Saunders D."/>
            <person name="Seeger K."/>
            <person name="Sharp S."/>
            <person name="Skelton J."/>
            <person name="Simmonds M.N."/>
            <person name="Squares R."/>
            <person name="Squares S."/>
            <person name="Stevens K."/>
            <person name="Taylor K."/>
            <person name="Taylor R.G."/>
            <person name="Tivey A."/>
            <person name="Walsh S.V."/>
            <person name="Warren T."/>
            <person name="Whitehead S."/>
            <person name="Woodward J.R."/>
            <person name="Volckaert G."/>
            <person name="Aert R."/>
            <person name="Robben J."/>
            <person name="Grymonprez B."/>
            <person name="Weltjens I."/>
            <person name="Vanstreels E."/>
            <person name="Rieger M."/>
            <person name="Schaefer M."/>
            <person name="Mueller-Auer S."/>
            <person name="Gabel C."/>
            <person name="Fuchs M."/>
            <person name="Duesterhoeft A."/>
            <person name="Fritzc C."/>
            <person name="Holzer E."/>
            <person name="Moestl D."/>
            <person name="Hilbert H."/>
            <person name="Borzym K."/>
            <person name="Langer I."/>
            <person name="Beck A."/>
            <person name="Lehrach H."/>
            <person name="Reinhardt R."/>
            <person name="Pohl T.M."/>
            <person name="Eger P."/>
            <person name="Zimmermann W."/>
            <person name="Wedler H."/>
            <person name="Wambutt R."/>
            <person name="Purnelle B."/>
            <person name="Goffeau A."/>
            <person name="Cadieu E."/>
            <person name="Dreano S."/>
            <person name="Gloux S."/>
            <person name="Lelaure V."/>
            <person name="Mottier S."/>
            <person name="Galibert F."/>
            <person name="Aves S.J."/>
            <person name="Xiang Z."/>
            <person name="Hunt C."/>
            <person name="Moore K."/>
            <person name="Hurst S.M."/>
            <person name="Lucas M."/>
            <person name="Rochet M."/>
            <person name="Gaillardin C."/>
            <person name="Tallada V.A."/>
            <person name="Garzon A."/>
            <person name="Thode G."/>
            <person name="Daga R.R."/>
            <person name="Cruzado L."/>
            <person name="Jimenez J."/>
            <person name="Sanchez M."/>
            <person name="del Rey F."/>
            <person name="Benito J."/>
            <person name="Dominguez A."/>
            <person name="Revuelta J.L."/>
            <person name="Moreno S."/>
            <person name="Armstrong J."/>
            <person name="Forsburg S.L."/>
            <person name="Cerutti L."/>
            <person name="Lowe T."/>
            <person name="McCombie W.R."/>
            <person name="Paulsen I."/>
            <person name="Potashkin J."/>
            <person name="Shpakovski G.V."/>
            <person name="Ussery D."/>
            <person name="Barrell B.G."/>
            <person name="Nurse P."/>
        </authorList>
    </citation>
    <scope>NUCLEOTIDE SEQUENCE [LARGE SCALE GENOMIC DNA]</scope>
    <source>
        <strain>972 / ATCC 24843</strain>
    </source>
</reference>
<name>NTM1_SCHPO</name>
<sequence length="219" mass="24388">MDPEKFYSDAIDYWNGVQPTVDGMLGGLGTGRIPQTDVVGSRTFLNRLNYRIGKIENLVAADCGAGIGRVTENVLLKIASHVDLVEPVENFISTAKKQLATKPCSFINVGLQNWTPEKNRYGLIWNQWCLSHLTDEDLIAYLSRCCEAIQEKGVICVKENVSSFEDTFDPIDSSVTRCEQSLKSLFKKANLVVVAETLQHGFPEELFPVKMYALVPHSS</sequence>
<accession>O13748</accession>
<feature type="chain" id="PRO_0000119291" description="Alpha N-terminal protein methyltransferase 1">
    <location>
        <begin position="1"/>
        <end position="219"/>
    </location>
</feature>
<feature type="binding site" evidence="1">
    <location>
        <position position="64"/>
    </location>
    <ligand>
        <name>S-adenosyl-L-methionine</name>
        <dbReference type="ChEBI" id="CHEBI:59789"/>
    </ligand>
</feature>
<feature type="binding site" evidence="1">
    <location>
        <position position="69"/>
    </location>
    <ligand>
        <name>S-adenosyl-L-methionine</name>
        <dbReference type="ChEBI" id="CHEBI:59789"/>
    </ligand>
</feature>
<feature type="binding site" evidence="1">
    <location>
        <begin position="111"/>
        <end position="112"/>
    </location>
    <ligand>
        <name>S-adenosyl-L-methionine</name>
        <dbReference type="ChEBI" id="CHEBI:59789"/>
    </ligand>
</feature>
<feature type="binding site" evidence="1">
    <location>
        <position position="127"/>
    </location>
    <ligand>
        <name>S-adenosyl-L-methionine</name>
        <dbReference type="ChEBI" id="CHEBI:59789"/>
    </ligand>
</feature>
<gene>
    <name type="primary">tae1</name>
    <name type="synonym">ntm1</name>
    <name type="ORF">SPAC16E8.14c</name>
</gene>
<comment type="function">
    <text evidence="1">Alpha-N-methyltransferase that methylates the N-terminus of target proteins containing the N-terminal motif [Ala/Pro/Ser]-Pro-Lys when the initiator Met is cleaved. Specifically catalyzes mono-, di- or tri-methylation of exposed alpha-amino group of Ala or Ser residue in the [Ala/Ser]-Pro-Lys motif and mono- or di-methylation of Pro in the Pro-Pro-Lys motif (By similarity).</text>
</comment>
<comment type="catalytic activity">
    <reaction>
        <text>N-terminal L-alanyl-L-prolyl-L-lysyl-[protein] + 3 S-adenosyl-L-methionine = N-terminal N,N,N-trimethyl-L-alanyl-L-prolyl-L-lysyl-[protein] + 3 S-adenosyl-L-homocysteine + 3 H(+)</text>
        <dbReference type="Rhea" id="RHEA:54712"/>
        <dbReference type="Rhea" id="RHEA-COMP:13785"/>
        <dbReference type="Rhea" id="RHEA-COMP:13971"/>
        <dbReference type="ChEBI" id="CHEBI:15378"/>
        <dbReference type="ChEBI" id="CHEBI:57856"/>
        <dbReference type="ChEBI" id="CHEBI:59789"/>
        <dbReference type="ChEBI" id="CHEBI:138057"/>
        <dbReference type="ChEBI" id="CHEBI:138315"/>
        <dbReference type="EC" id="2.1.1.244"/>
    </reaction>
</comment>
<comment type="catalytic activity">
    <reaction>
        <text>N-terminal L-seryl-L-prolyl-L-lysyl-[protein] + 3 S-adenosyl-L-methionine = N-terminal N,N,N-trimethyl-L-seryl-L-prolyl-L-lysyl-[protein] + 3 S-adenosyl-L-homocysteine + 3 H(+)</text>
        <dbReference type="Rhea" id="RHEA:54724"/>
        <dbReference type="Rhea" id="RHEA-COMP:13789"/>
        <dbReference type="Rhea" id="RHEA-COMP:13973"/>
        <dbReference type="ChEBI" id="CHEBI:15378"/>
        <dbReference type="ChEBI" id="CHEBI:57856"/>
        <dbReference type="ChEBI" id="CHEBI:59789"/>
        <dbReference type="ChEBI" id="CHEBI:138061"/>
        <dbReference type="ChEBI" id="CHEBI:138317"/>
        <dbReference type="EC" id="2.1.1.244"/>
    </reaction>
</comment>
<comment type="catalytic activity">
    <reaction>
        <text>N-terminal L-prolyl-L-prolyl-L-lysyl-[protein] + 2 S-adenosyl-L-methionine = N-terminal N,N-dimethyl-L-prolyl-L-prolyl-L-lysyl-[protein] + 2 S-adenosyl-L-homocysteine + 2 H(+)</text>
        <dbReference type="Rhea" id="RHEA:54736"/>
        <dbReference type="Rhea" id="RHEA-COMP:13787"/>
        <dbReference type="Rhea" id="RHEA-COMP:13974"/>
        <dbReference type="ChEBI" id="CHEBI:15378"/>
        <dbReference type="ChEBI" id="CHEBI:57856"/>
        <dbReference type="ChEBI" id="CHEBI:59789"/>
        <dbReference type="ChEBI" id="CHEBI:138059"/>
        <dbReference type="ChEBI" id="CHEBI:138318"/>
        <dbReference type="EC" id="2.1.1.244"/>
    </reaction>
</comment>
<comment type="subcellular location">
    <subcellularLocation>
        <location evidence="1">Cytoplasm</location>
    </subcellularLocation>
</comment>
<comment type="similarity">
    <text evidence="2">Belongs to the methyltransferase superfamily. NTM1 family.</text>
</comment>
<protein>
    <recommendedName>
        <fullName>Alpha N-terminal protein methyltransferase 1</fullName>
        <ecNumber>2.1.1.244</ecNumber>
    </recommendedName>
    <alternativeName>
        <fullName>Translation associated element 1</fullName>
    </alternativeName>
    <alternativeName>
        <fullName>X-Pro-Lys N-terminal protein methyltransferase 1</fullName>
        <shortName>NTM1</shortName>
    </alternativeName>
</protein>
<organism>
    <name type="scientific">Schizosaccharomyces pombe (strain 972 / ATCC 24843)</name>
    <name type="common">Fission yeast</name>
    <dbReference type="NCBI Taxonomy" id="284812"/>
    <lineage>
        <taxon>Eukaryota</taxon>
        <taxon>Fungi</taxon>
        <taxon>Dikarya</taxon>
        <taxon>Ascomycota</taxon>
        <taxon>Taphrinomycotina</taxon>
        <taxon>Schizosaccharomycetes</taxon>
        <taxon>Schizosaccharomycetales</taxon>
        <taxon>Schizosaccharomycetaceae</taxon>
        <taxon>Schizosaccharomyces</taxon>
    </lineage>
</organism>
<proteinExistence type="inferred from homology"/>
<evidence type="ECO:0000250" key="1"/>
<evidence type="ECO:0000305" key="2"/>
<dbReference type="EC" id="2.1.1.244"/>
<dbReference type="EMBL" id="CU329670">
    <property type="protein sequence ID" value="CAB11042.1"/>
    <property type="molecule type" value="Genomic_DNA"/>
</dbReference>
<dbReference type="PIR" id="T37794">
    <property type="entry name" value="T37794"/>
</dbReference>
<dbReference type="RefSeq" id="NP_594227.1">
    <property type="nucleotide sequence ID" value="NM_001019650.2"/>
</dbReference>
<dbReference type="SMR" id="O13748"/>
<dbReference type="BioGRID" id="278806">
    <property type="interactions" value="1"/>
</dbReference>
<dbReference type="FunCoup" id="O13748">
    <property type="interactions" value="615"/>
</dbReference>
<dbReference type="STRING" id="284812.O13748"/>
<dbReference type="iPTMnet" id="O13748"/>
<dbReference type="PaxDb" id="4896-SPAC16E8.14c.1"/>
<dbReference type="EnsemblFungi" id="SPAC16E8.14c.1">
    <property type="protein sequence ID" value="SPAC16E8.14c.1:pep"/>
    <property type="gene ID" value="SPAC16E8.14c"/>
</dbReference>
<dbReference type="GeneID" id="2542340"/>
<dbReference type="KEGG" id="spo:2542340"/>
<dbReference type="PomBase" id="SPAC16E8.14c">
    <property type="gene designation" value="tae1"/>
</dbReference>
<dbReference type="VEuPathDB" id="FungiDB:SPAC16E8.14c"/>
<dbReference type="eggNOG" id="KOG3178">
    <property type="taxonomic scope" value="Eukaryota"/>
</dbReference>
<dbReference type="HOGENOM" id="CLU_055356_3_1_1"/>
<dbReference type="InParanoid" id="O13748"/>
<dbReference type="OMA" id="ETYYCFN"/>
<dbReference type="PhylomeDB" id="O13748"/>
<dbReference type="PRO" id="PR:O13748"/>
<dbReference type="Proteomes" id="UP000002485">
    <property type="component" value="Chromosome I"/>
</dbReference>
<dbReference type="GO" id="GO:0005737">
    <property type="term" value="C:cytoplasm"/>
    <property type="evidence" value="ECO:0000318"/>
    <property type="project" value="GO_Central"/>
</dbReference>
<dbReference type="GO" id="GO:0005829">
    <property type="term" value="C:cytosol"/>
    <property type="evidence" value="ECO:0007005"/>
    <property type="project" value="PomBase"/>
</dbReference>
<dbReference type="GO" id="GO:0071885">
    <property type="term" value="F:N-terminal protein N-methyltransferase activity"/>
    <property type="evidence" value="ECO:0000318"/>
    <property type="project" value="GO_Central"/>
</dbReference>
<dbReference type="GO" id="GO:0002181">
    <property type="term" value="P:cytoplasmic translation"/>
    <property type="evidence" value="ECO:0000318"/>
    <property type="project" value="GO_Central"/>
</dbReference>
<dbReference type="GO" id="GO:0032259">
    <property type="term" value="P:methylation"/>
    <property type="evidence" value="ECO:0007669"/>
    <property type="project" value="UniProtKB-KW"/>
</dbReference>
<dbReference type="FunFam" id="3.40.50.150:FF:000025">
    <property type="entry name" value="N-terminal Xaa-Pro-Lys N-methyltransferase 1"/>
    <property type="match status" value="1"/>
</dbReference>
<dbReference type="Gene3D" id="3.40.50.150">
    <property type="entry name" value="Vaccinia Virus protein VP39"/>
    <property type="match status" value="1"/>
</dbReference>
<dbReference type="InterPro" id="IPR008576">
    <property type="entry name" value="MeTrfase_NTM1"/>
</dbReference>
<dbReference type="InterPro" id="IPR029063">
    <property type="entry name" value="SAM-dependent_MTases_sf"/>
</dbReference>
<dbReference type="PANTHER" id="PTHR12753">
    <property type="entry name" value="AD-003 - RELATED"/>
    <property type="match status" value="1"/>
</dbReference>
<dbReference type="PANTHER" id="PTHR12753:SF0">
    <property type="entry name" value="ALPHA N-TERMINAL PROTEIN METHYLTRANSFERASE 1"/>
    <property type="match status" value="1"/>
</dbReference>
<dbReference type="Pfam" id="PF05891">
    <property type="entry name" value="Methyltransf_PK"/>
    <property type="match status" value="1"/>
</dbReference>
<dbReference type="PIRSF" id="PIRSF016958">
    <property type="entry name" value="DUF858_MeTrfase_lik"/>
    <property type="match status" value="1"/>
</dbReference>
<dbReference type="SUPFAM" id="SSF53335">
    <property type="entry name" value="S-adenosyl-L-methionine-dependent methyltransferases"/>
    <property type="match status" value="1"/>
</dbReference>
<keyword id="KW-0963">Cytoplasm</keyword>
<keyword id="KW-0489">Methyltransferase</keyword>
<keyword id="KW-1185">Reference proteome</keyword>
<keyword id="KW-0949">S-adenosyl-L-methionine</keyword>
<keyword id="KW-0808">Transferase</keyword>